<accession>B5YSI2</accession>
<dbReference type="EMBL" id="CP001164">
    <property type="protein sequence ID" value="ACI37075.1"/>
    <property type="molecule type" value="Genomic_DNA"/>
</dbReference>
<dbReference type="RefSeq" id="WP_000867217.1">
    <property type="nucleotide sequence ID" value="NC_011353.1"/>
</dbReference>
<dbReference type="SMR" id="B5YSI2"/>
<dbReference type="GeneID" id="93775233"/>
<dbReference type="KEGG" id="ecf:ECH74115_2729"/>
<dbReference type="HOGENOM" id="CLU_189289_0_0_6"/>
<dbReference type="HAMAP" id="MF_01549">
    <property type="entry name" value="DsrB"/>
    <property type="match status" value="1"/>
</dbReference>
<dbReference type="InterPro" id="IPR019717">
    <property type="entry name" value="Dextransucrase_DSRB"/>
</dbReference>
<dbReference type="NCBIfam" id="NF007981">
    <property type="entry name" value="PRK10708.1"/>
    <property type="match status" value="1"/>
</dbReference>
<dbReference type="Pfam" id="PF10781">
    <property type="entry name" value="DSRB"/>
    <property type="match status" value="1"/>
</dbReference>
<protein>
    <recommendedName>
        <fullName evidence="1">Protein DsrB</fullName>
    </recommendedName>
</protein>
<gene>
    <name evidence="1" type="primary">dsrB</name>
    <name type="ordered locus">ECH74115_2729</name>
</gene>
<comment type="similarity">
    <text evidence="1">Belongs to the DsrB family.</text>
</comment>
<proteinExistence type="inferred from homology"/>
<sequence length="62" mass="6946">MKVNDRVTVKTDGGPRRPGVVLAVEEFSEGTMYLVSLEDYPLGIWFFNEAGHQDGIFVEKAE</sequence>
<feature type="chain" id="PRO_1000146847" description="Protein DsrB">
    <location>
        <begin position="1"/>
        <end position="62"/>
    </location>
</feature>
<evidence type="ECO:0000255" key="1">
    <source>
        <dbReference type="HAMAP-Rule" id="MF_01549"/>
    </source>
</evidence>
<organism>
    <name type="scientific">Escherichia coli O157:H7 (strain EC4115 / EHEC)</name>
    <dbReference type="NCBI Taxonomy" id="444450"/>
    <lineage>
        <taxon>Bacteria</taxon>
        <taxon>Pseudomonadati</taxon>
        <taxon>Pseudomonadota</taxon>
        <taxon>Gammaproteobacteria</taxon>
        <taxon>Enterobacterales</taxon>
        <taxon>Enterobacteriaceae</taxon>
        <taxon>Escherichia</taxon>
    </lineage>
</organism>
<name>DSRB_ECO5E</name>
<reference key="1">
    <citation type="journal article" date="2011" name="Proc. Natl. Acad. Sci. U.S.A.">
        <title>Genomic anatomy of Escherichia coli O157:H7 outbreaks.</title>
        <authorList>
            <person name="Eppinger M."/>
            <person name="Mammel M.K."/>
            <person name="Leclerc J.E."/>
            <person name="Ravel J."/>
            <person name="Cebula T.A."/>
        </authorList>
    </citation>
    <scope>NUCLEOTIDE SEQUENCE [LARGE SCALE GENOMIC DNA]</scope>
    <source>
        <strain>EC4115 / EHEC</strain>
    </source>
</reference>